<evidence type="ECO:0000250" key="1"/>
<evidence type="ECO:0000255" key="2">
    <source>
        <dbReference type="HAMAP-Rule" id="MF_00047"/>
    </source>
</evidence>
<gene>
    <name evidence="2" type="primary">ddl</name>
    <name type="ordered locus">Blon_0320</name>
    <name type="ordered locus">BLIJ_0326</name>
</gene>
<sequence length="395" mass="42306">MAKKRVVVLYGGRADEHSISCISTAGVLGAMDTERFEPIPVGITKDGKWIINGEDPRGWNLDGGELPTVKITPESRPVMLDPSRGQDGFFIGEPSHINSADSGFGTSFVSMPDPEMHHALTSLGHVDAVLPVLHGPYGEDGTVQGLLEMMGVPYVGCGVFASAACMDKHYTKVVLGAAGIPTAPGVTVDARNFTAADVLAKIEDAGLTYPLFIKPSRAGSSFGVTKVEKADDRETQQDRLAAAIATAGEHDWKVLVEQGIDGREIECAVLCPKAGDEPEASWPGEIVLDHQNDDQFYDFDSKYMDASASHVEVPANLPVSVLEDVRDVARRAFKAVDGAGLSRVDTFVTPDGTVMVNEINTMPGFTPISMYPKAWDATGVSYTELITRLIEGVLR</sequence>
<accession>B7GU04</accession>
<accession>E8MP96</accession>
<reference key="1">
    <citation type="journal article" date="2008" name="Proc. Natl. Acad. Sci. U.S.A.">
        <title>The genome sequence of Bifidobacterium longum subsp. infantis reveals adaptations for milk utilization within the infant microbiome.</title>
        <authorList>
            <person name="Sela D.A."/>
            <person name="Chapman J."/>
            <person name="Adeuya A."/>
            <person name="Kim J.H."/>
            <person name="Chen F."/>
            <person name="Whitehead T.R."/>
            <person name="Lapidus A."/>
            <person name="Rokhsar D.S."/>
            <person name="Lebrilla C.B."/>
            <person name="German J.B."/>
            <person name="Price N.P."/>
            <person name="Richardson P.M."/>
            <person name="Mills D.A."/>
        </authorList>
    </citation>
    <scope>NUCLEOTIDE SEQUENCE [LARGE SCALE GENOMIC DNA]</scope>
    <source>
        <strain>ATCC 15697 / DSM 20088 / JCM 1222 / NCTC 11817 / S12</strain>
    </source>
</reference>
<reference key="2">
    <citation type="journal article" date="2011" name="Nature">
        <title>Bifidobacteria can protect from enteropathogenic infection through production of acetate.</title>
        <authorList>
            <person name="Fukuda S."/>
            <person name="Toh H."/>
            <person name="Hase K."/>
            <person name="Oshima K."/>
            <person name="Nakanishi Y."/>
            <person name="Yoshimura K."/>
            <person name="Tobe T."/>
            <person name="Clarke J.M."/>
            <person name="Topping D.L."/>
            <person name="Suzuki T."/>
            <person name="Taylor T.D."/>
            <person name="Itoh K."/>
            <person name="Kikuchi J."/>
            <person name="Morita H."/>
            <person name="Hattori M."/>
            <person name="Ohno H."/>
        </authorList>
    </citation>
    <scope>NUCLEOTIDE SEQUENCE [LARGE SCALE GENOMIC DNA]</scope>
    <source>
        <strain>ATCC 15697 / DSM 20088 / JCM 1222 / NCTC 11817 / S12</strain>
    </source>
</reference>
<name>DDL_BIFLS</name>
<organism>
    <name type="scientific">Bifidobacterium longum subsp. infantis (strain ATCC 15697 / DSM 20088 / JCM 1222 / NCTC 11817 / S12)</name>
    <dbReference type="NCBI Taxonomy" id="391904"/>
    <lineage>
        <taxon>Bacteria</taxon>
        <taxon>Bacillati</taxon>
        <taxon>Actinomycetota</taxon>
        <taxon>Actinomycetes</taxon>
        <taxon>Bifidobacteriales</taxon>
        <taxon>Bifidobacteriaceae</taxon>
        <taxon>Bifidobacterium</taxon>
    </lineage>
</organism>
<comment type="function">
    <text evidence="2">Cell wall formation.</text>
</comment>
<comment type="catalytic activity">
    <reaction evidence="2">
        <text>2 D-alanine + ATP = D-alanyl-D-alanine + ADP + phosphate + H(+)</text>
        <dbReference type="Rhea" id="RHEA:11224"/>
        <dbReference type="ChEBI" id="CHEBI:15378"/>
        <dbReference type="ChEBI" id="CHEBI:30616"/>
        <dbReference type="ChEBI" id="CHEBI:43474"/>
        <dbReference type="ChEBI" id="CHEBI:57416"/>
        <dbReference type="ChEBI" id="CHEBI:57822"/>
        <dbReference type="ChEBI" id="CHEBI:456216"/>
        <dbReference type="EC" id="6.3.2.4"/>
    </reaction>
</comment>
<comment type="cofactor">
    <cofactor evidence="1">
        <name>Mg(2+)</name>
        <dbReference type="ChEBI" id="CHEBI:18420"/>
    </cofactor>
    <cofactor evidence="1">
        <name>Mn(2+)</name>
        <dbReference type="ChEBI" id="CHEBI:29035"/>
    </cofactor>
    <text evidence="1">Binds 2 magnesium or manganese ions per subunit.</text>
</comment>
<comment type="pathway">
    <text evidence="2">Cell wall biogenesis; peptidoglycan biosynthesis.</text>
</comment>
<comment type="subcellular location">
    <subcellularLocation>
        <location evidence="2">Cytoplasm</location>
    </subcellularLocation>
</comment>
<comment type="similarity">
    <text evidence="2">Belongs to the D-alanine--D-alanine ligase family.</text>
</comment>
<protein>
    <recommendedName>
        <fullName evidence="2">D-alanine--D-alanine ligase</fullName>
        <ecNumber evidence="2">6.3.2.4</ecNumber>
    </recommendedName>
    <alternativeName>
        <fullName evidence="2">D-Ala-D-Ala ligase</fullName>
    </alternativeName>
    <alternativeName>
        <fullName evidence="2">D-alanylalanine synthetase</fullName>
    </alternativeName>
</protein>
<proteinExistence type="inferred from homology"/>
<dbReference type="EC" id="6.3.2.4" evidence="2"/>
<dbReference type="EMBL" id="CP001095">
    <property type="protein sequence ID" value="ACJ51445.1"/>
    <property type="molecule type" value="Genomic_DNA"/>
</dbReference>
<dbReference type="EMBL" id="AP010889">
    <property type="protein sequence ID" value="BAJ67920.1"/>
    <property type="molecule type" value="Genomic_DNA"/>
</dbReference>
<dbReference type="RefSeq" id="WP_012576753.1">
    <property type="nucleotide sequence ID" value="NC_011593.1"/>
</dbReference>
<dbReference type="SMR" id="B7GU04"/>
<dbReference type="KEGG" id="bln:Blon_0320"/>
<dbReference type="KEGG" id="blon:BLIJ_0326"/>
<dbReference type="PATRIC" id="fig|391904.8.peg.329"/>
<dbReference type="HOGENOM" id="CLU_039268_0_1_11"/>
<dbReference type="UniPathway" id="UPA00219"/>
<dbReference type="Proteomes" id="UP000001360">
    <property type="component" value="Chromosome"/>
</dbReference>
<dbReference type="GO" id="GO:0005829">
    <property type="term" value="C:cytosol"/>
    <property type="evidence" value="ECO:0007669"/>
    <property type="project" value="TreeGrafter"/>
</dbReference>
<dbReference type="GO" id="GO:0005524">
    <property type="term" value="F:ATP binding"/>
    <property type="evidence" value="ECO:0007669"/>
    <property type="project" value="UniProtKB-KW"/>
</dbReference>
<dbReference type="GO" id="GO:0008716">
    <property type="term" value="F:D-alanine-D-alanine ligase activity"/>
    <property type="evidence" value="ECO:0007669"/>
    <property type="project" value="UniProtKB-UniRule"/>
</dbReference>
<dbReference type="GO" id="GO:0046872">
    <property type="term" value="F:metal ion binding"/>
    <property type="evidence" value="ECO:0007669"/>
    <property type="project" value="UniProtKB-KW"/>
</dbReference>
<dbReference type="GO" id="GO:0071555">
    <property type="term" value="P:cell wall organization"/>
    <property type="evidence" value="ECO:0007669"/>
    <property type="project" value="UniProtKB-KW"/>
</dbReference>
<dbReference type="GO" id="GO:0009252">
    <property type="term" value="P:peptidoglycan biosynthetic process"/>
    <property type="evidence" value="ECO:0007669"/>
    <property type="project" value="UniProtKB-UniRule"/>
</dbReference>
<dbReference type="GO" id="GO:0008360">
    <property type="term" value="P:regulation of cell shape"/>
    <property type="evidence" value="ECO:0007669"/>
    <property type="project" value="UniProtKB-KW"/>
</dbReference>
<dbReference type="FunFam" id="3.30.470.20:FF:000008">
    <property type="entry name" value="D-alanine--D-alanine ligase"/>
    <property type="match status" value="1"/>
</dbReference>
<dbReference type="Gene3D" id="3.40.50.20">
    <property type="match status" value="1"/>
</dbReference>
<dbReference type="Gene3D" id="3.30.1490.20">
    <property type="entry name" value="ATP-grasp fold, A domain"/>
    <property type="match status" value="1"/>
</dbReference>
<dbReference type="Gene3D" id="3.30.470.20">
    <property type="entry name" value="ATP-grasp fold, B domain"/>
    <property type="match status" value="1"/>
</dbReference>
<dbReference type="HAMAP" id="MF_00047">
    <property type="entry name" value="Dala_Dala_lig"/>
    <property type="match status" value="1"/>
</dbReference>
<dbReference type="InterPro" id="IPR011761">
    <property type="entry name" value="ATP-grasp"/>
</dbReference>
<dbReference type="InterPro" id="IPR013815">
    <property type="entry name" value="ATP_grasp_subdomain_1"/>
</dbReference>
<dbReference type="InterPro" id="IPR000291">
    <property type="entry name" value="D-Ala_lig_Van_CS"/>
</dbReference>
<dbReference type="InterPro" id="IPR005905">
    <property type="entry name" value="D_ala_D_ala"/>
</dbReference>
<dbReference type="InterPro" id="IPR011095">
    <property type="entry name" value="Dala_Dala_lig_C"/>
</dbReference>
<dbReference type="InterPro" id="IPR011127">
    <property type="entry name" value="Dala_Dala_lig_N"/>
</dbReference>
<dbReference type="InterPro" id="IPR016185">
    <property type="entry name" value="PreATP-grasp_dom_sf"/>
</dbReference>
<dbReference type="NCBIfam" id="TIGR01205">
    <property type="entry name" value="D_ala_D_alaTIGR"/>
    <property type="match status" value="1"/>
</dbReference>
<dbReference type="NCBIfam" id="NF002528">
    <property type="entry name" value="PRK01966.1-4"/>
    <property type="match status" value="1"/>
</dbReference>
<dbReference type="PANTHER" id="PTHR23132">
    <property type="entry name" value="D-ALANINE--D-ALANINE LIGASE"/>
    <property type="match status" value="1"/>
</dbReference>
<dbReference type="PANTHER" id="PTHR23132:SF25">
    <property type="entry name" value="D-ALANINE--D-ALANINE LIGASE A"/>
    <property type="match status" value="1"/>
</dbReference>
<dbReference type="Pfam" id="PF07478">
    <property type="entry name" value="Dala_Dala_lig_C"/>
    <property type="match status" value="1"/>
</dbReference>
<dbReference type="Pfam" id="PF01820">
    <property type="entry name" value="Dala_Dala_lig_N"/>
    <property type="match status" value="1"/>
</dbReference>
<dbReference type="PIRSF" id="PIRSF039102">
    <property type="entry name" value="Ddl/VanB"/>
    <property type="match status" value="1"/>
</dbReference>
<dbReference type="SUPFAM" id="SSF56059">
    <property type="entry name" value="Glutathione synthetase ATP-binding domain-like"/>
    <property type="match status" value="1"/>
</dbReference>
<dbReference type="SUPFAM" id="SSF52440">
    <property type="entry name" value="PreATP-grasp domain"/>
    <property type="match status" value="1"/>
</dbReference>
<dbReference type="PROSITE" id="PS50975">
    <property type="entry name" value="ATP_GRASP"/>
    <property type="match status" value="1"/>
</dbReference>
<dbReference type="PROSITE" id="PS00843">
    <property type="entry name" value="DALA_DALA_LIGASE_1"/>
    <property type="match status" value="1"/>
</dbReference>
<dbReference type="PROSITE" id="PS00844">
    <property type="entry name" value="DALA_DALA_LIGASE_2"/>
    <property type="match status" value="1"/>
</dbReference>
<feature type="chain" id="PRO_1000202195" description="D-alanine--D-alanine ligase">
    <location>
        <begin position="1"/>
        <end position="395"/>
    </location>
</feature>
<feature type="domain" description="ATP-grasp" evidence="2">
    <location>
        <begin position="172"/>
        <end position="391"/>
    </location>
</feature>
<feature type="binding site" evidence="2">
    <location>
        <begin position="204"/>
        <end position="266"/>
    </location>
    <ligand>
        <name>ATP</name>
        <dbReference type="ChEBI" id="CHEBI:30616"/>
    </ligand>
</feature>
<feature type="binding site" evidence="2">
    <location>
        <position position="345"/>
    </location>
    <ligand>
        <name>Mg(2+)</name>
        <dbReference type="ChEBI" id="CHEBI:18420"/>
        <label>1</label>
    </ligand>
</feature>
<feature type="binding site" evidence="2">
    <location>
        <position position="358"/>
    </location>
    <ligand>
        <name>Mg(2+)</name>
        <dbReference type="ChEBI" id="CHEBI:18420"/>
        <label>1</label>
    </ligand>
</feature>
<feature type="binding site" evidence="2">
    <location>
        <position position="358"/>
    </location>
    <ligand>
        <name>Mg(2+)</name>
        <dbReference type="ChEBI" id="CHEBI:18420"/>
        <label>2</label>
    </ligand>
</feature>
<feature type="binding site" evidence="2">
    <location>
        <position position="360"/>
    </location>
    <ligand>
        <name>Mg(2+)</name>
        <dbReference type="ChEBI" id="CHEBI:18420"/>
        <label>2</label>
    </ligand>
</feature>
<keyword id="KW-0067">ATP-binding</keyword>
<keyword id="KW-0133">Cell shape</keyword>
<keyword id="KW-0961">Cell wall biogenesis/degradation</keyword>
<keyword id="KW-0963">Cytoplasm</keyword>
<keyword id="KW-0436">Ligase</keyword>
<keyword id="KW-0460">Magnesium</keyword>
<keyword id="KW-0464">Manganese</keyword>
<keyword id="KW-0479">Metal-binding</keyword>
<keyword id="KW-0547">Nucleotide-binding</keyword>
<keyword id="KW-0573">Peptidoglycan synthesis</keyword>